<feature type="chain" id="PRO_0000267154" description="UPF0398 protein BLi02355/BL05236">
    <location>
        <begin position="1"/>
        <end position="183"/>
    </location>
</feature>
<gene>
    <name type="ordered locus">BLi02355</name>
    <name type="ordered locus">BL05236</name>
</gene>
<dbReference type="EMBL" id="AE017333">
    <property type="protein sequence ID" value="AAU41235.1"/>
    <property type="molecule type" value="Genomic_DNA"/>
</dbReference>
<dbReference type="EMBL" id="CP000002">
    <property type="protein sequence ID" value="AAU23879.1"/>
    <property type="molecule type" value="Genomic_DNA"/>
</dbReference>
<dbReference type="RefSeq" id="WP_009328012.1">
    <property type="nucleotide sequence ID" value="NC_006322.1"/>
</dbReference>
<dbReference type="SMR" id="Q65I79"/>
<dbReference type="STRING" id="279010.BL05236"/>
<dbReference type="KEGG" id="bld:BLi02355"/>
<dbReference type="KEGG" id="bli:BL05236"/>
<dbReference type="eggNOG" id="COG4474">
    <property type="taxonomic scope" value="Bacteria"/>
</dbReference>
<dbReference type="HOGENOM" id="CLU_105319_0_0_9"/>
<dbReference type="Proteomes" id="UP000000606">
    <property type="component" value="Chromosome"/>
</dbReference>
<dbReference type="Gene3D" id="3.40.50.450">
    <property type="match status" value="1"/>
</dbReference>
<dbReference type="HAMAP" id="MF_01575">
    <property type="entry name" value="UPF0398"/>
    <property type="match status" value="1"/>
</dbReference>
<dbReference type="InterPro" id="IPR010697">
    <property type="entry name" value="YspA"/>
</dbReference>
<dbReference type="NCBIfam" id="NF010181">
    <property type="entry name" value="PRK13660.1"/>
    <property type="match status" value="1"/>
</dbReference>
<dbReference type="PANTHER" id="PTHR38440:SF1">
    <property type="entry name" value="UPF0398 PROTEIN SPR0331"/>
    <property type="match status" value="1"/>
</dbReference>
<dbReference type="PANTHER" id="PTHR38440">
    <property type="entry name" value="UPF0398 PROTEIN YPSA"/>
    <property type="match status" value="1"/>
</dbReference>
<dbReference type="Pfam" id="PF06908">
    <property type="entry name" value="YpsA"/>
    <property type="match status" value="1"/>
</dbReference>
<dbReference type="PIRSF" id="PIRSF021290">
    <property type="entry name" value="DUF1273"/>
    <property type="match status" value="1"/>
</dbReference>
<dbReference type="SUPFAM" id="SSF102405">
    <property type="entry name" value="MCP/YpsA-like"/>
    <property type="match status" value="1"/>
</dbReference>
<sequence>MKVLAVTGYKPFELGIFKHDDKALFYIKKALENRMIALLEEGLEWVLISGQLGTELWAAEVAFSLQEEFPDLKVAVITPFLEQEKKWSEKNQEQYEAVLAASDFTESLTHRPYESPVQFKQKNRFFIEKADGLLILYDEEIEGSPVYMLNEAKKAQEKRDFPIYTITMDDLRVTVEECSFYEE</sequence>
<reference key="1">
    <citation type="journal article" date="2004" name="J. Mol. Microbiol. Biotechnol.">
        <title>The complete genome sequence of Bacillus licheniformis DSM13, an organism with great industrial potential.</title>
        <authorList>
            <person name="Veith B."/>
            <person name="Herzberg C."/>
            <person name="Steckel S."/>
            <person name="Feesche J."/>
            <person name="Maurer K.H."/>
            <person name="Ehrenreich P."/>
            <person name="Baeumer S."/>
            <person name="Henne A."/>
            <person name="Liesegang H."/>
            <person name="Merkl R."/>
            <person name="Ehrenreich A."/>
            <person name="Gottschalk G."/>
        </authorList>
    </citation>
    <scope>NUCLEOTIDE SEQUENCE [LARGE SCALE GENOMIC DNA]</scope>
    <source>
        <strain>ATCC 14580 / DSM 13 / JCM 2505 / CCUG 7422 / NBRC 12200 / NCIMB 9375 / NCTC 10341 / NRRL NRS-1264 / Gibson 46</strain>
    </source>
</reference>
<reference key="2">
    <citation type="journal article" date="2004" name="Genome Biol.">
        <title>Complete genome sequence of the industrial bacterium Bacillus licheniformis and comparisons with closely related Bacillus species.</title>
        <authorList>
            <person name="Rey M.W."/>
            <person name="Ramaiya P."/>
            <person name="Nelson B.A."/>
            <person name="Brody-Karpin S.D."/>
            <person name="Zaretsky E.J."/>
            <person name="Tang M."/>
            <person name="Lopez de Leon A."/>
            <person name="Xiang H."/>
            <person name="Gusti V."/>
            <person name="Clausen I.G."/>
            <person name="Olsen P.B."/>
            <person name="Rasmussen M.D."/>
            <person name="Andersen J.T."/>
            <person name="Joergensen P.L."/>
            <person name="Larsen T.S."/>
            <person name="Sorokin A."/>
            <person name="Bolotin A."/>
            <person name="Lapidus A."/>
            <person name="Galleron N."/>
            <person name="Ehrlich S.D."/>
            <person name="Berka R.M."/>
        </authorList>
    </citation>
    <scope>NUCLEOTIDE SEQUENCE [LARGE SCALE GENOMIC DNA]</scope>
    <source>
        <strain>ATCC 14580 / DSM 13 / JCM 2505 / CCUG 7422 / NBRC 12200 / NCIMB 9375 / NCTC 10341 / NRRL NRS-1264 / Gibson 46</strain>
    </source>
</reference>
<organism>
    <name type="scientific">Bacillus licheniformis (strain ATCC 14580 / DSM 13 / JCM 2505 / CCUG 7422 / NBRC 12200 / NCIMB 9375 / NCTC 10341 / NRRL NRS-1264 / Gibson 46)</name>
    <dbReference type="NCBI Taxonomy" id="279010"/>
    <lineage>
        <taxon>Bacteria</taxon>
        <taxon>Bacillati</taxon>
        <taxon>Bacillota</taxon>
        <taxon>Bacilli</taxon>
        <taxon>Bacillales</taxon>
        <taxon>Bacillaceae</taxon>
        <taxon>Bacillus</taxon>
    </lineage>
</organism>
<comment type="similarity">
    <text evidence="1">Belongs to the UPF0398 family.</text>
</comment>
<protein>
    <recommendedName>
        <fullName evidence="1">UPF0398 protein BLi02355/BL05236</fullName>
    </recommendedName>
</protein>
<proteinExistence type="inferred from homology"/>
<keyword id="KW-1185">Reference proteome</keyword>
<accession>Q65I79</accession>
<accession>Q62TN0</accession>
<evidence type="ECO:0000255" key="1">
    <source>
        <dbReference type="HAMAP-Rule" id="MF_01575"/>
    </source>
</evidence>
<name>Y2355_BACLD</name>